<keyword id="KW-0106">Calcium</keyword>
<keyword id="KW-0342">GTP-binding</keyword>
<keyword id="KW-0378">Hydrolase</keyword>
<keyword id="KW-0460">Magnesium</keyword>
<keyword id="KW-0472">Membrane</keyword>
<keyword id="KW-0479">Metal-binding</keyword>
<keyword id="KW-0496">Mitochondrion</keyword>
<keyword id="KW-1000">Mitochondrion outer membrane</keyword>
<keyword id="KW-0547">Nucleotide-binding</keyword>
<keyword id="KW-1185">Reference proteome</keyword>
<keyword id="KW-0677">Repeat</keyword>
<keyword id="KW-0812">Transmembrane</keyword>
<keyword id="KW-1133">Transmembrane helix</keyword>
<feature type="chain" id="PRO_0000239322" description="Mitochondrial Rho GTPase 2">
    <location>
        <begin position="1"/>
        <end position="618"/>
    </location>
</feature>
<feature type="topological domain" description="Cytoplasmic" evidence="3">
    <location>
        <begin position="1"/>
        <end position="591"/>
    </location>
</feature>
<feature type="transmembrane region" description="Helical; Anchor for type IV membrane protein" evidence="3">
    <location>
        <begin position="592"/>
        <end position="614"/>
    </location>
</feature>
<feature type="topological domain" description="Mitochondrial intermembrane" evidence="3">
    <location>
        <begin position="615"/>
        <end position="618"/>
    </location>
</feature>
<feature type="domain" description="Miro 1" evidence="5">
    <location>
        <begin position="2"/>
        <end position="168"/>
    </location>
</feature>
<feature type="domain" description="EF-hand 1" evidence="4">
    <location>
        <begin position="184"/>
        <end position="219"/>
    </location>
</feature>
<feature type="domain" description="EF-hand 2" evidence="4">
    <location>
        <begin position="304"/>
        <end position="339"/>
    </location>
</feature>
<feature type="domain" description="Miro 2" evidence="5">
    <location>
        <begin position="416"/>
        <end position="579"/>
    </location>
</feature>
<feature type="binding site" evidence="2">
    <location>
        <position position="16"/>
    </location>
    <ligand>
        <name>GTP</name>
        <dbReference type="ChEBI" id="CHEBI:37565"/>
        <label>1</label>
    </ligand>
</feature>
<feature type="binding site" evidence="2">
    <location>
        <position position="17"/>
    </location>
    <ligand>
        <name>GTP</name>
        <dbReference type="ChEBI" id="CHEBI:37565"/>
        <label>1</label>
    </ligand>
</feature>
<feature type="binding site" evidence="2">
    <location>
        <position position="18"/>
    </location>
    <ligand>
        <name>GTP</name>
        <dbReference type="ChEBI" id="CHEBI:37565"/>
        <label>1</label>
    </ligand>
</feature>
<feature type="binding site" evidence="2">
    <location>
        <position position="18"/>
    </location>
    <ligand>
        <name>Mg(2+)</name>
        <dbReference type="ChEBI" id="CHEBI:18420"/>
        <label>1</label>
    </ligand>
</feature>
<feature type="binding site" evidence="2">
    <location>
        <position position="19"/>
    </location>
    <ligand>
        <name>GTP</name>
        <dbReference type="ChEBI" id="CHEBI:37565"/>
        <label>1</label>
    </ligand>
</feature>
<feature type="binding site" evidence="2">
    <location>
        <position position="35"/>
    </location>
    <ligand>
        <name>Mg(2+)</name>
        <dbReference type="ChEBI" id="CHEBI:18420"/>
        <label>1</label>
    </ligand>
</feature>
<feature type="binding site" evidence="2">
    <location>
        <position position="57"/>
    </location>
    <ligand>
        <name>Mg(2+)</name>
        <dbReference type="ChEBI" id="CHEBI:18420"/>
        <label>1</label>
    </ligand>
</feature>
<feature type="binding site" evidence="2">
    <location>
        <position position="59"/>
    </location>
    <ligand>
        <name>GTP</name>
        <dbReference type="ChEBI" id="CHEBI:37565"/>
        <label>1</label>
    </ligand>
</feature>
<feature type="binding site" evidence="2">
    <location>
        <position position="118"/>
    </location>
    <ligand>
        <name>GTP</name>
        <dbReference type="ChEBI" id="CHEBI:37565"/>
        <label>1</label>
    </ligand>
</feature>
<feature type="binding site" evidence="2">
    <location>
        <position position="119"/>
    </location>
    <ligand>
        <name>GTP</name>
        <dbReference type="ChEBI" id="CHEBI:37565"/>
        <label>1</label>
    </ligand>
</feature>
<feature type="binding site" evidence="2">
    <location>
        <position position="121"/>
    </location>
    <ligand>
        <name>GTP</name>
        <dbReference type="ChEBI" id="CHEBI:37565"/>
        <label>1</label>
    </ligand>
</feature>
<feature type="binding site" evidence="2">
    <location>
        <position position="149"/>
    </location>
    <ligand>
        <name>GTP</name>
        <dbReference type="ChEBI" id="CHEBI:37565"/>
        <label>1</label>
    </ligand>
</feature>
<feature type="binding site" evidence="2">
    <location>
        <position position="150"/>
    </location>
    <ligand>
        <name>GTP</name>
        <dbReference type="ChEBI" id="CHEBI:37565"/>
        <label>1</label>
    </ligand>
</feature>
<feature type="binding site" evidence="4">
    <location>
        <position position="197"/>
    </location>
    <ligand>
        <name>Ca(2+)</name>
        <dbReference type="ChEBI" id="CHEBI:29108"/>
        <label>1</label>
    </ligand>
</feature>
<feature type="binding site" evidence="4">
    <location>
        <position position="199"/>
    </location>
    <ligand>
        <name>Ca(2+)</name>
        <dbReference type="ChEBI" id="CHEBI:29108"/>
        <label>1</label>
    </ligand>
</feature>
<feature type="binding site" evidence="4">
    <location>
        <position position="201"/>
    </location>
    <ligand>
        <name>Ca(2+)</name>
        <dbReference type="ChEBI" id="CHEBI:29108"/>
        <label>1</label>
    </ligand>
</feature>
<feature type="binding site" evidence="4">
    <location>
        <position position="208"/>
    </location>
    <ligand>
        <name>Ca(2+)</name>
        <dbReference type="ChEBI" id="CHEBI:29108"/>
        <label>1</label>
    </ligand>
</feature>
<feature type="binding site" evidence="4">
    <location>
        <position position="317"/>
    </location>
    <ligand>
        <name>Ca(2+)</name>
        <dbReference type="ChEBI" id="CHEBI:29108"/>
        <label>2</label>
    </ligand>
</feature>
<feature type="binding site" evidence="4">
    <location>
        <position position="319"/>
    </location>
    <ligand>
        <name>Ca(2+)</name>
        <dbReference type="ChEBI" id="CHEBI:29108"/>
        <label>2</label>
    </ligand>
</feature>
<feature type="binding site" evidence="4">
    <location>
        <position position="321"/>
    </location>
    <ligand>
        <name>Ca(2+)</name>
        <dbReference type="ChEBI" id="CHEBI:29108"/>
        <label>2</label>
    </ligand>
</feature>
<feature type="binding site" evidence="4">
    <location>
        <position position="328"/>
    </location>
    <ligand>
        <name>Ca(2+)</name>
        <dbReference type="ChEBI" id="CHEBI:29108"/>
        <label>2</label>
    </ligand>
</feature>
<feature type="binding site" evidence="1">
    <location>
        <position position="428"/>
    </location>
    <ligand>
        <name>GTP</name>
        <dbReference type="ChEBI" id="CHEBI:37565"/>
        <label>2</label>
    </ligand>
</feature>
<feature type="binding site" evidence="1">
    <location>
        <position position="430"/>
    </location>
    <ligand>
        <name>GTP</name>
        <dbReference type="ChEBI" id="CHEBI:37565"/>
        <label>2</label>
    </ligand>
</feature>
<feature type="binding site" evidence="1">
    <location>
        <position position="431"/>
    </location>
    <ligand>
        <name>GTP</name>
        <dbReference type="ChEBI" id="CHEBI:37565"/>
        <label>2</label>
    </ligand>
</feature>
<feature type="binding site" evidence="1">
    <location>
        <position position="432"/>
    </location>
    <ligand>
        <name>GTP</name>
        <dbReference type="ChEBI" id="CHEBI:37565"/>
        <label>2</label>
    </ligand>
</feature>
<feature type="binding site" evidence="1">
    <location>
        <position position="432"/>
    </location>
    <ligand>
        <name>Mg(2+)</name>
        <dbReference type="ChEBI" id="CHEBI:18420"/>
        <label>2</label>
    </ligand>
</feature>
<feature type="binding site" evidence="1">
    <location>
        <position position="433"/>
    </location>
    <ligand>
        <name>GTP</name>
        <dbReference type="ChEBI" id="CHEBI:37565"/>
        <label>2</label>
    </ligand>
</feature>
<feature type="binding site" evidence="1">
    <location>
        <position position="474"/>
    </location>
    <ligand>
        <name>Mg(2+)</name>
        <dbReference type="ChEBI" id="CHEBI:18420"/>
        <label>2</label>
    </ligand>
</feature>
<feature type="binding site" evidence="1">
    <location>
        <position position="528"/>
    </location>
    <ligand>
        <name>GTP</name>
        <dbReference type="ChEBI" id="CHEBI:37565"/>
        <label>2</label>
    </ligand>
</feature>
<feature type="binding site" evidence="1">
    <location>
        <position position="530"/>
    </location>
    <ligand>
        <name>GTP</name>
        <dbReference type="ChEBI" id="CHEBI:37565"/>
        <label>2</label>
    </ligand>
</feature>
<feature type="binding site" evidence="1">
    <location>
        <position position="559"/>
    </location>
    <ligand>
        <name>GTP</name>
        <dbReference type="ChEBI" id="CHEBI:37565"/>
        <label>2</label>
    </ligand>
</feature>
<sequence>MKRDVRILLLGEAQVGKTSLIMALVGEEFPEEVPPRAEEITIPADVTPEKVPTHIVDYSESEQTEDELQEEIAKANVVCVVYDVTKEATIEKIRTKWIPMVNGGAEKGARIPIILVGNKSDLQMGSSMEVILPIMNQFSEIETCVECSAKNLKNISELFYYAQKAVLHPTAPLYDPEEKQLRPACSRALTRIFNLSDQDNNQILSDDELNYFQKSCFGNPLAPQALEDVKMVVWKNTTDGVQDNGLTLNGFLFLNTLFIQRGRHETTWTILRRFGYDDELELTDDYLYPQFRLPPGCSTELNHLGYQFLQRLFEKHDKDQDGALSPAELQNFFSVFPCMPWGPELYNTVCTTDKGLLSLHGFLCQWTLIAYLDVRHCLECLGYLGYPILSEQDSQTQALTVTREKRIDLEKGQTQRNVFLCKVLGARGAGKSAFLQAFLGRSLAAQRESPGEPSPYTINTVQVNGQEKYLILHEVSAETQFTKPSDAACDVACLIYDLSDPKSFSYCASIYKQHYMDSQIPCVFVASKTDLPEASQQPGLSPAEFCYKHCLPPPFLFSCHSQGPPGTAIYTKLATAATFPHLNAVELGAASFWLRVALGAAVTALVGFTLYRVLAKNK</sequence>
<comment type="function">
    <text evidence="1 2">Atypical mitochondrial nucleoside-triphosphatase (NTPase) involved in mitochondrial trafficking. Probably involved in control of anterograde transport of mitochondria and their subcellular distribution. Can hydrolyze GTP, ATP and UTP (By similarity).</text>
</comment>
<comment type="catalytic activity">
    <reaction evidence="2">
        <text>GTP + H2O = GDP + phosphate + H(+)</text>
        <dbReference type="Rhea" id="RHEA:19669"/>
        <dbReference type="ChEBI" id="CHEBI:15377"/>
        <dbReference type="ChEBI" id="CHEBI:15378"/>
        <dbReference type="ChEBI" id="CHEBI:37565"/>
        <dbReference type="ChEBI" id="CHEBI:43474"/>
        <dbReference type="ChEBI" id="CHEBI:58189"/>
    </reaction>
    <physiologicalReaction direction="left-to-right" evidence="2">
        <dbReference type="Rhea" id="RHEA:19670"/>
    </physiologicalReaction>
</comment>
<comment type="catalytic activity">
    <reaction evidence="1">
        <text>ATP + H2O = ADP + phosphate + H(+)</text>
        <dbReference type="Rhea" id="RHEA:13065"/>
        <dbReference type="ChEBI" id="CHEBI:15377"/>
        <dbReference type="ChEBI" id="CHEBI:15378"/>
        <dbReference type="ChEBI" id="CHEBI:30616"/>
        <dbReference type="ChEBI" id="CHEBI:43474"/>
        <dbReference type="ChEBI" id="CHEBI:456216"/>
    </reaction>
    <physiologicalReaction direction="left-to-right" evidence="1">
        <dbReference type="Rhea" id="RHEA:13066"/>
    </physiologicalReaction>
</comment>
<comment type="catalytic activity">
    <reaction evidence="1">
        <text>UTP + H2O = UDP + phosphate + H(+)</text>
        <dbReference type="Rhea" id="RHEA:64900"/>
        <dbReference type="ChEBI" id="CHEBI:15377"/>
        <dbReference type="ChEBI" id="CHEBI:15378"/>
        <dbReference type="ChEBI" id="CHEBI:43474"/>
        <dbReference type="ChEBI" id="CHEBI:46398"/>
        <dbReference type="ChEBI" id="CHEBI:58223"/>
    </reaction>
    <physiologicalReaction direction="left-to-right" evidence="1">
        <dbReference type="Rhea" id="RHEA:64901"/>
    </physiologicalReaction>
</comment>
<comment type="subunit">
    <text evidence="1">Homodimer.</text>
</comment>
<comment type="subcellular location">
    <subcellularLocation>
        <location evidence="1">Mitochondrion outer membrane</location>
        <topology evidence="1">Single-pass type IV membrane protein</topology>
    </subcellularLocation>
</comment>
<comment type="similarity">
    <text evidence="5 6">Belongs to the mitochondrial Rho GTPase family.</text>
</comment>
<name>MIRO2_CHICK</name>
<accession>Q5ZM83</accession>
<protein>
    <recommendedName>
        <fullName>Mitochondrial Rho GTPase 2</fullName>
        <shortName>MIRO-2</shortName>
        <ecNumber evidence="2">3.6.5.-</ecNumber>
    </recommendedName>
    <alternativeName>
        <fullName>Ras homolog gene family member T2</fullName>
    </alternativeName>
</protein>
<gene>
    <name type="primary">RHOT2</name>
    <name type="ORF">RCJMB04_2o8</name>
</gene>
<proteinExistence type="evidence at transcript level"/>
<dbReference type="EC" id="3.6.5.-" evidence="2"/>
<dbReference type="EMBL" id="AJ719501">
    <property type="protein sequence ID" value="CAG31160.1"/>
    <property type="molecule type" value="mRNA"/>
</dbReference>
<dbReference type="RefSeq" id="NP_001074335.1">
    <property type="nucleotide sequence ID" value="NM_001080866.1"/>
</dbReference>
<dbReference type="SMR" id="Q5ZM83"/>
<dbReference type="FunCoup" id="Q5ZM83">
    <property type="interactions" value="1683"/>
</dbReference>
<dbReference type="STRING" id="9031.ENSGALP00000003923"/>
<dbReference type="PaxDb" id="9031-ENSGALP00000003923"/>
<dbReference type="GeneID" id="427651"/>
<dbReference type="KEGG" id="gga:427651"/>
<dbReference type="CTD" id="89941"/>
<dbReference type="VEuPathDB" id="HostDB:geneid_427651"/>
<dbReference type="eggNOG" id="KOG1707">
    <property type="taxonomic scope" value="Eukaryota"/>
</dbReference>
<dbReference type="InParanoid" id="Q5ZM83"/>
<dbReference type="OrthoDB" id="10020961at2759"/>
<dbReference type="PhylomeDB" id="Q5ZM83"/>
<dbReference type="PRO" id="PR:Q5ZM83"/>
<dbReference type="Proteomes" id="UP000000539">
    <property type="component" value="Unassembled WGS sequence"/>
</dbReference>
<dbReference type="GO" id="GO:0005741">
    <property type="term" value="C:mitochondrial outer membrane"/>
    <property type="evidence" value="ECO:0000250"/>
    <property type="project" value="UniProtKB"/>
</dbReference>
<dbReference type="GO" id="GO:0005509">
    <property type="term" value="F:calcium ion binding"/>
    <property type="evidence" value="ECO:0007669"/>
    <property type="project" value="InterPro"/>
</dbReference>
<dbReference type="GO" id="GO:0005525">
    <property type="term" value="F:GTP binding"/>
    <property type="evidence" value="ECO:0000318"/>
    <property type="project" value="GO_Central"/>
</dbReference>
<dbReference type="GO" id="GO:0003924">
    <property type="term" value="F:GTPase activity"/>
    <property type="evidence" value="ECO:0000318"/>
    <property type="project" value="GO_Central"/>
</dbReference>
<dbReference type="GO" id="GO:0019725">
    <property type="term" value="P:cellular homeostasis"/>
    <property type="evidence" value="ECO:0000250"/>
    <property type="project" value="UniProtKB"/>
</dbReference>
<dbReference type="GO" id="GO:0097345">
    <property type="term" value="P:mitochondrial outer membrane permeabilization"/>
    <property type="evidence" value="ECO:0000250"/>
    <property type="project" value="UniProtKB"/>
</dbReference>
<dbReference type="GO" id="GO:0007005">
    <property type="term" value="P:mitochondrion organization"/>
    <property type="evidence" value="ECO:0000318"/>
    <property type="project" value="GO_Central"/>
</dbReference>
<dbReference type="GO" id="GO:0047497">
    <property type="term" value="P:mitochondrion transport along microtubule"/>
    <property type="evidence" value="ECO:0000250"/>
    <property type="project" value="UniProtKB"/>
</dbReference>
<dbReference type="CDD" id="cd01893">
    <property type="entry name" value="Miro1"/>
    <property type="match status" value="1"/>
</dbReference>
<dbReference type="CDD" id="cd01892">
    <property type="entry name" value="Miro2"/>
    <property type="match status" value="1"/>
</dbReference>
<dbReference type="FunFam" id="1.10.238.10:FF:000011">
    <property type="entry name" value="Mitochondrial Rho GTPase"/>
    <property type="match status" value="1"/>
</dbReference>
<dbReference type="FunFam" id="1.10.238.10:FF:000021">
    <property type="entry name" value="Mitochondrial Rho GTPase"/>
    <property type="match status" value="1"/>
</dbReference>
<dbReference type="FunFam" id="3.40.50.300:FF:000170">
    <property type="entry name" value="Mitochondrial Rho GTPase"/>
    <property type="match status" value="1"/>
</dbReference>
<dbReference type="FunFam" id="3.40.50.300:FF:000553">
    <property type="entry name" value="Mitochondrial Rho GTPase"/>
    <property type="match status" value="1"/>
</dbReference>
<dbReference type="Gene3D" id="1.10.238.10">
    <property type="entry name" value="EF-hand"/>
    <property type="match status" value="2"/>
</dbReference>
<dbReference type="Gene3D" id="3.40.50.300">
    <property type="entry name" value="P-loop containing nucleotide triphosphate hydrolases"/>
    <property type="match status" value="2"/>
</dbReference>
<dbReference type="InterPro" id="IPR011992">
    <property type="entry name" value="EF-hand-dom_pair"/>
</dbReference>
<dbReference type="InterPro" id="IPR018247">
    <property type="entry name" value="EF_Hand_1_Ca_BS"/>
</dbReference>
<dbReference type="InterPro" id="IPR013566">
    <property type="entry name" value="EF_hand_assoc_1"/>
</dbReference>
<dbReference type="InterPro" id="IPR013567">
    <property type="entry name" value="EF_hand_assoc_2"/>
</dbReference>
<dbReference type="InterPro" id="IPR002048">
    <property type="entry name" value="EF_hand_dom"/>
</dbReference>
<dbReference type="InterPro" id="IPR021181">
    <property type="entry name" value="Miro"/>
</dbReference>
<dbReference type="InterPro" id="IPR052266">
    <property type="entry name" value="Miro-EF-hand_domain"/>
</dbReference>
<dbReference type="InterPro" id="IPR020860">
    <property type="entry name" value="MIRO_dom"/>
</dbReference>
<dbReference type="InterPro" id="IPR027417">
    <property type="entry name" value="P-loop_NTPase"/>
</dbReference>
<dbReference type="InterPro" id="IPR001806">
    <property type="entry name" value="Small_GTPase"/>
</dbReference>
<dbReference type="PANTHER" id="PTHR46819">
    <property type="entry name" value="EF-HAND CALCIUM-BINDING DOMAIN-CONTAINING PROTEIN 7"/>
    <property type="match status" value="1"/>
</dbReference>
<dbReference type="PANTHER" id="PTHR46819:SF1">
    <property type="entry name" value="EF-HAND CALCIUM-BINDING DOMAIN-CONTAINING PROTEIN 7"/>
    <property type="match status" value="1"/>
</dbReference>
<dbReference type="Pfam" id="PF08355">
    <property type="entry name" value="EF_assoc_1"/>
    <property type="match status" value="1"/>
</dbReference>
<dbReference type="Pfam" id="PF08356">
    <property type="entry name" value="EF_assoc_2"/>
    <property type="match status" value="1"/>
</dbReference>
<dbReference type="Pfam" id="PF00071">
    <property type="entry name" value="Ras"/>
    <property type="match status" value="2"/>
</dbReference>
<dbReference type="PIRSF" id="PIRSF037488">
    <property type="entry name" value="Mt_Rho_GTPase"/>
    <property type="match status" value="1"/>
</dbReference>
<dbReference type="PRINTS" id="PR00449">
    <property type="entry name" value="RASTRNSFRMNG"/>
</dbReference>
<dbReference type="SMART" id="SM00054">
    <property type="entry name" value="EFh"/>
    <property type="match status" value="2"/>
</dbReference>
<dbReference type="SMART" id="SM00175">
    <property type="entry name" value="RAB"/>
    <property type="match status" value="1"/>
</dbReference>
<dbReference type="SMART" id="SM00173">
    <property type="entry name" value="RAS"/>
    <property type="match status" value="1"/>
</dbReference>
<dbReference type="SMART" id="SM00174">
    <property type="entry name" value="RHO"/>
    <property type="match status" value="1"/>
</dbReference>
<dbReference type="SUPFAM" id="SSF47473">
    <property type="entry name" value="EF-hand"/>
    <property type="match status" value="1"/>
</dbReference>
<dbReference type="SUPFAM" id="SSF52540">
    <property type="entry name" value="P-loop containing nucleoside triphosphate hydrolases"/>
    <property type="match status" value="2"/>
</dbReference>
<dbReference type="PROSITE" id="PS00018">
    <property type="entry name" value="EF_HAND_1"/>
    <property type="match status" value="2"/>
</dbReference>
<dbReference type="PROSITE" id="PS50222">
    <property type="entry name" value="EF_HAND_2"/>
    <property type="match status" value="2"/>
</dbReference>
<dbReference type="PROSITE" id="PS51423">
    <property type="entry name" value="MIRO"/>
    <property type="match status" value="2"/>
</dbReference>
<reference key="1">
    <citation type="journal article" date="2005" name="Genome Biol.">
        <title>Full-length cDNAs from chicken bursal lymphocytes to facilitate gene function analysis.</title>
        <authorList>
            <person name="Caldwell R.B."/>
            <person name="Kierzek A.M."/>
            <person name="Arakawa H."/>
            <person name="Bezzubov Y."/>
            <person name="Zaim J."/>
            <person name="Fiedler P."/>
            <person name="Kutter S."/>
            <person name="Blagodatski A."/>
            <person name="Kostovska D."/>
            <person name="Koter M."/>
            <person name="Plachy J."/>
            <person name="Carninci P."/>
            <person name="Hayashizaki Y."/>
            <person name="Buerstedde J.-M."/>
        </authorList>
    </citation>
    <scope>NUCLEOTIDE SEQUENCE [LARGE SCALE MRNA]</scope>
    <source>
        <strain>CB</strain>
        <tissue>Bursa of Fabricius</tissue>
    </source>
</reference>
<evidence type="ECO:0000250" key="1">
    <source>
        <dbReference type="UniProtKB" id="Q8IXI1"/>
    </source>
</evidence>
<evidence type="ECO:0000250" key="2">
    <source>
        <dbReference type="UniProtKB" id="Q8IXI2"/>
    </source>
</evidence>
<evidence type="ECO:0000255" key="3"/>
<evidence type="ECO:0000255" key="4">
    <source>
        <dbReference type="PROSITE-ProRule" id="PRU00448"/>
    </source>
</evidence>
<evidence type="ECO:0000255" key="5">
    <source>
        <dbReference type="PROSITE-ProRule" id="PRU00757"/>
    </source>
</evidence>
<evidence type="ECO:0000305" key="6"/>
<organism>
    <name type="scientific">Gallus gallus</name>
    <name type="common">Chicken</name>
    <dbReference type="NCBI Taxonomy" id="9031"/>
    <lineage>
        <taxon>Eukaryota</taxon>
        <taxon>Metazoa</taxon>
        <taxon>Chordata</taxon>
        <taxon>Craniata</taxon>
        <taxon>Vertebrata</taxon>
        <taxon>Euteleostomi</taxon>
        <taxon>Archelosauria</taxon>
        <taxon>Archosauria</taxon>
        <taxon>Dinosauria</taxon>
        <taxon>Saurischia</taxon>
        <taxon>Theropoda</taxon>
        <taxon>Coelurosauria</taxon>
        <taxon>Aves</taxon>
        <taxon>Neognathae</taxon>
        <taxon>Galloanserae</taxon>
        <taxon>Galliformes</taxon>
        <taxon>Phasianidae</taxon>
        <taxon>Phasianinae</taxon>
        <taxon>Gallus</taxon>
    </lineage>
</organism>